<comment type="function">
    <text evidence="1">Catalyzes the condensation of iminoaspartate with dihydroxyacetone phosphate to form quinolinate.</text>
</comment>
<comment type="catalytic activity">
    <reaction evidence="1">
        <text>iminosuccinate + dihydroxyacetone phosphate = quinolinate + phosphate + 2 H2O + H(+)</text>
        <dbReference type="Rhea" id="RHEA:25888"/>
        <dbReference type="ChEBI" id="CHEBI:15377"/>
        <dbReference type="ChEBI" id="CHEBI:15378"/>
        <dbReference type="ChEBI" id="CHEBI:29959"/>
        <dbReference type="ChEBI" id="CHEBI:43474"/>
        <dbReference type="ChEBI" id="CHEBI:57642"/>
        <dbReference type="ChEBI" id="CHEBI:77875"/>
        <dbReference type="EC" id="2.5.1.72"/>
    </reaction>
    <physiologicalReaction direction="left-to-right" evidence="1">
        <dbReference type="Rhea" id="RHEA:25889"/>
    </physiologicalReaction>
</comment>
<comment type="cofactor">
    <cofactor evidence="1">
        <name>[4Fe-4S] cluster</name>
        <dbReference type="ChEBI" id="CHEBI:49883"/>
    </cofactor>
    <text evidence="1">Binds 1 [4Fe-4S] cluster per subunit.</text>
</comment>
<comment type="pathway">
    <text evidence="1">Cofactor biosynthesis; NAD(+) biosynthesis; quinolinate from iminoaspartate: step 1/1.</text>
</comment>
<comment type="subcellular location">
    <subcellularLocation>
        <location evidence="1">Cytoplasm</location>
    </subcellularLocation>
</comment>
<comment type="similarity">
    <text evidence="1">Belongs to the quinolinate synthase family. Type 1 subfamily.</text>
</comment>
<sequence length="352" mass="38293">MTQISERLLVQAHLDAKQPKPLTAEEEAYYRSAIAAELKAQDAVLVAHFYCDPIIQALAEETGGCVSDSLEMARFGNAHPAKTVVVAGVKFMGETAKILNPEKRVLMPTLEATCSLDLGCPVDEFSAFCDQHPERTVVVYANTSAAVKARADWVVTSSCALEIVESLKDNGETIIWGPDKHLGTYIQRQTGADMLLWDGACIVHEEFKSKQLEDMKALYPDAAILVHPESPTSVIELADAVGSTSQLIAAAQSLPNKTLIVATDRGIFYKMQQLCPDKVFIEAPTAGNGAACRSCAHCPWMAMNTLERTLKCLKEGSNEIFVDPALIPQAIRPLKRMLDFTQAARMKLAGNA</sequence>
<organism>
    <name type="scientific">Pseudomonas fluorescens (strain Pf0-1)</name>
    <dbReference type="NCBI Taxonomy" id="205922"/>
    <lineage>
        <taxon>Bacteria</taxon>
        <taxon>Pseudomonadati</taxon>
        <taxon>Pseudomonadota</taxon>
        <taxon>Gammaproteobacteria</taxon>
        <taxon>Pseudomonadales</taxon>
        <taxon>Pseudomonadaceae</taxon>
        <taxon>Pseudomonas</taxon>
    </lineage>
</organism>
<protein>
    <recommendedName>
        <fullName evidence="1">Quinolinate synthase</fullName>
        <ecNumber evidence="1">2.5.1.72</ecNumber>
    </recommendedName>
</protein>
<feature type="chain" id="PRO_1000024966" description="Quinolinate synthase">
    <location>
        <begin position="1"/>
        <end position="352"/>
    </location>
</feature>
<feature type="binding site" evidence="1">
    <location>
        <position position="48"/>
    </location>
    <ligand>
        <name>iminosuccinate</name>
        <dbReference type="ChEBI" id="CHEBI:77875"/>
    </ligand>
</feature>
<feature type="binding site" evidence="1">
    <location>
        <position position="69"/>
    </location>
    <ligand>
        <name>iminosuccinate</name>
        <dbReference type="ChEBI" id="CHEBI:77875"/>
    </ligand>
</feature>
<feature type="binding site" evidence="1">
    <location>
        <position position="114"/>
    </location>
    <ligand>
        <name>[4Fe-4S] cluster</name>
        <dbReference type="ChEBI" id="CHEBI:49883"/>
    </ligand>
</feature>
<feature type="binding site" evidence="1">
    <location>
        <begin position="140"/>
        <end position="142"/>
    </location>
    <ligand>
        <name>iminosuccinate</name>
        <dbReference type="ChEBI" id="CHEBI:77875"/>
    </ligand>
</feature>
<feature type="binding site" evidence="1">
    <location>
        <position position="157"/>
    </location>
    <ligand>
        <name>iminosuccinate</name>
        <dbReference type="ChEBI" id="CHEBI:77875"/>
    </ligand>
</feature>
<feature type="binding site" evidence="1">
    <location>
        <position position="201"/>
    </location>
    <ligand>
        <name>[4Fe-4S] cluster</name>
        <dbReference type="ChEBI" id="CHEBI:49883"/>
    </ligand>
</feature>
<feature type="binding site" evidence="1">
    <location>
        <begin position="227"/>
        <end position="229"/>
    </location>
    <ligand>
        <name>iminosuccinate</name>
        <dbReference type="ChEBI" id="CHEBI:77875"/>
    </ligand>
</feature>
<feature type="binding site" evidence="1">
    <location>
        <position position="244"/>
    </location>
    <ligand>
        <name>iminosuccinate</name>
        <dbReference type="ChEBI" id="CHEBI:77875"/>
    </ligand>
</feature>
<feature type="binding site" evidence="1">
    <location>
        <position position="298"/>
    </location>
    <ligand>
        <name>[4Fe-4S] cluster</name>
        <dbReference type="ChEBI" id="CHEBI:49883"/>
    </ligand>
</feature>
<keyword id="KW-0004">4Fe-4S</keyword>
<keyword id="KW-0963">Cytoplasm</keyword>
<keyword id="KW-0408">Iron</keyword>
<keyword id="KW-0411">Iron-sulfur</keyword>
<keyword id="KW-0479">Metal-binding</keyword>
<keyword id="KW-0662">Pyridine nucleotide biosynthesis</keyword>
<keyword id="KW-0808">Transferase</keyword>
<accession>Q3K7X0</accession>
<proteinExistence type="inferred from homology"/>
<name>NADA_PSEPF</name>
<dbReference type="EC" id="2.5.1.72" evidence="1"/>
<dbReference type="EMBL" id="CP000094">
    <property type="protein sequence ID" value="ABA76134.1"/>
    <property type="molecule type" value="Genomic_DNA"/>
</dbReference>
<dbReference type="RefSeq" id="WP_011335636.1">
    <property type="nucleotide sequence ID" value="NC_007492.2"/>
</dbReference>
<dbReference type="SMR" id="Q3K7X0"/>
<dbReference type="KEGG" id="pfo:Pfl01_4397"/>
<dbReference type="eggNOG" id="COG0379">
    <property type="taxonomic scope" value="Bacteria"/>
</dbReference>
<dbReference type="HOGENOM" id="CLU_047382_1_0_6"/>
<dbReference type="UniPathway" id="UPA00253">
    <property type="reaction ID" value="UER00327"/>
</dbReference>
<dbReference type="Proteomes" id="UP000002704">
    <property type="component" value="Chromosome"/>
</dbReference>
<dbReference type="GO" id="GO:0005829">
    <property type="term" value="C:cytosol"/>
    <property type="evidence" value="ECO:0007669"/>
    <property type="project" value="TreeGrafter"/>
</dbReference>
<dbReference type="GO" id="GO:0051539">
    <property type="term" value="F:4 iron, 4 sulfur cluster binding"/>
    <property type="evidence" value="ECO:0007669"/>
    <property type="project" value="UniProtKB-KW"/>
</dbReference>
<dbReference type="GO" id="GO:0046872">
    <property type="term" value="F:metal ion binding"/>
    <property type="evidence" value="ECO:0007669"/>
    <property type="project" value="UniProtKB-KW"/>
</dbReference>
<dbReference type="GO" id="GO:0008987">
    <property type="term" value="F:quinolinate synthetase A activity"/>
    <property type="evidence" value="ECO:0007669"/>
    <property type="project" value="UniProtKB-UniRule"/>
</dbReference>
<dbReference type="GO" id="GO:0034628">
    <property type="term" value="P:'de novo' NAD biosynthetic process from L-aspartate"/>
    <property type="evidence" value="ECO:0007669"/>
    <property type="project" value="TreeGrafter"/>
</dbReference>
<dbReference type="FunFam" id="3.40.50.10800:FF:000001">
    <property type="entry name" value="Quinolinate synthase A"/>
    <property type="match status" value="1"/>
</dbReference>
<dbReference type="FunFam" id="3.40.50.10800:FF:000003">
    <property type="entry name" value="Quinolinate synthase A"/>
    <property type="match status" value="1"/>
</dbReference>
<dbReference type="Gene3D" id="3.40.50.10800">
    <property type="entry name" value="NadA-like"/>
    <property type="match status" value="3"/>
</dbReference>
<dbReference type="HAMAP" id="MF_00567">
    <property type="entry name" value="NadA_type1"/>
    <property type="match status" value="1"/>
</dbReference>
<dbReference type="InterPro" id="IPR003473">
    <property type="entry name" value="NadA"/>
</dbReference>
<dbReference type="InterPro" id="IPR036094">
    <property type="entry name" value="NadA_sf"/>
</dbReference>
<dbReference type="InterPro" id="IPR023513">
    <property type="entry name" value="Quinolinate_synth_A_type1"/>
</dbReference>
<dbReference type="NCBIfam" id="TIGR00550">
    <property type="entry name" value="nadA"/>
    <property type="match status" value="1"/>
</dbReference>
<dbReference type="NCBIfam" id="NF006877">
    <property type="entry name" value="PRK09375.1-1"/>
    <property type="match status" value="1"/>
</dbReference>
<dbReference type="NCBIfam" id="NF006878">
    <property type="entry name" value="PRK09375.1-2"/>
    <property type="match status" value="1"/>
</dbReference>
<dbReference type="PANTHER" id="PTHR30573:SF0">
    <property type="entry name" value="QUINOLINATE SYNTHASE, CHLOROPLASTIC"/>
    <property type="match status" value="1"/>
</dbReference>
<dbReference type="PANTHER" id="PTHR30573">
    <property type="entry name" value="QUINOLINATE SYNTHETASE A"/>
    <property type="match status" value="1"/>
</dbReference>
<dbReference type="Pfam" id="PF02445">
    <property type="entry name" value="NadA"/>
    <property type="match status" value="1"/>
</dbReference>
<dbReference type="SUPFAM" id="SSF142754">
    <property type="entry name" value="NadA-like"/>
    <property type="match status" value="1"/>
</dbReference>
<evidence type="ECO:0000255" key="1">
    <source>
        <dbReference type="HAMAP-Rule" id="MF_00567"/>
    </source>
</evidence>
<reference key="1">
    <citation type="journal article" date="2009" name="Genome Biol.">
        <title>Genomic and genetic analyses of diversity and plant interactions of Pseudomonas fluorescens.</title>
        <authorList>
            <person name="Silby M.W."/>
            <person name="Cerdeno-Tarraga A.M."/>
            <person name="Vernikos G.S."/>
            <person name="Giddens S.R."/>
            <person name="Jackson R.W."/>
            <person name="Preston G.M."/>
            <person name="Zhang X.-X."/>
            <person name="Moon C.D."/>
            <person name="Gehrig S.M."/>
            <person name="Godfrey S.A.C."/>
            <person name="Knight C.G."/>
            <person name="Malone J.G."/>
            <person name="Robinson Z."/>
            <person name="Spiers A.J."/>
            <person name="Harris S."/>
            <person name="Challis G.L."/>
            <person name="Yaxley A.M."/>
            <person name="Harris D."/>
            <person name="Seeger K."/>
            <person name="Murphy L."/>
            <person name="Rutter S."/>
            <person name="Squares R."/>
            <person name="Quail M.A."/>
            <person name="Saunders E."/>
            <person name="Mavromatis K."/>
            <person name="Brettin T.S."/>
            <person name="Bentley S.D."/>
            <person name="Hothersall J."/>
            <person name="Stephens E."/>
            <person name="Thomas C.M."/>
            <person name="Parkhill J."/>
            <person name="Levy S.B."/>
            <person name="Rainey P.B."/>
            <person name="Thomson N.R."/>
        </authorList>
    </citation>
    <scope>NUCLEOTIDE SEQUENCE [LARGE SCALE GENOMIC DNA]</scope>
    <source>
        <strain>Pf0-1</strain>
    </source>
</reference>
<gene>
    <name evidence="1" type="primary">nadA</name>
    <name type="ordered locus">Pfl01_4397</name>
</gene>